<keyword id="KW-0489">Methyltransferase</keyword>
<keyword id="KW-1185">Reference proteome</keyword>
<keyword id="KW-0949">S-adenosyl-L-methionine</keyword>
<keyword id="KW-0808">Transferase</keyword>
<keyword id="KW-0831">Ubiquinone biosynthesis</keyword>
<accession>Q4FVG3</accession>
<gene>
    <name evidence="1" type="primary">ubiG</name>
    <name type="ordered locus">Psyc_0121</name>
</gene>
<name>UBIG_PSYA2</name>
<dbReference type="EC" id="2.1.1.222" evidence="1"/>
<dbReference type="EC" id="2.1.1.64" evidence="1"/>
<dbReference type="EMBL" id="CP000082">
    <property type="protein sequence ID" value="AAZ17995.1"/>
    <property type="status" value="ALT_INIT"/>
    <property type="molecule type" value="Genomic_DNA"/>
</dbReference>
<dbReference type="RefSeq" id="WP_011279434.1">
    <property type="nucleotide sequence ID" value="NC_007204.1"/>
</dbReference>
<dbReference type="SMR" id="Q4FVG3"/>
<dbReference type="STRING" id="259536.Psyc_0121"/>
<dbReference type="KEGG" id="par:Psyc_0121"/>
<dbReference type="eggNOG" id="COG2227">
    <property type="taxonomic scope" value="Bacteria"/>
</dbReference>
<dbReference type="HOGENOM" id="CLU_042432_5_0_6"/>
<dbReference type="OrthoDB" id="9801538at2"/>
<dbReference type="UniPathway" id="UPA00232"/>
<dbReference type="Proteomes" id="UP000000546">
    <property type="component" value="Chromosome"/>
</dbReference>
<dbReference type="GO" id="GO:0102208">
    <property type="term" value="F:2-polyprenyl-6-hydroxyphenol methylase activity"/>
    <property type="evidence" value="ECO:0007669"/>
    <property type="project" value="UniProtKB-EC"/>
</dbReference>
<dbReference type="GO" id="GO:0061542">
    <property type="term" value="F:3-demethylubiquinol 3-O-methyltransferase activity"/>
    <property type="evidence" value="ECO:0007669"/>
    <property type="project" value="UniProtKB-UniRule"/>
</dbReference>
<dbReference type="GO" id="GO:0010420">
    <property type="term" value="F:polyprenyldihydroxybenzoate methyltransferase activity"/>
    <property type="evidence" value="ECO:0007669"/>
    <property type="project" value="InterPro"/>
</dbReference>
<dbReference type="GO" id="GO:0032259">
    <property type="term" value="P:methylation"/>
    <property type="evidence" value="ECO:0007669"/>
    <property type="project" value="UniProtKB-KW"/>
</dbReference>
<dbReference type="CDD" id="cd02440">
    <property type="entry name" value="AdoMet_MTases"/>
    <property type="match status" value="1"/>
</dbReference>
<dbReference type="FunFam" id="3.40.50.150:FF:000028">
    <property type="entry name" value="Ubiquinone biosynthesis O-methyltransferase"/>
    <property type="match status" value="1"/>
</dbReference>
<dbReference type="Gene3D" id="3.40.50.150">
    <property type="entry name" value="Vaccinia Virus protein VP39"/>
    <property type="match status" value="1"/>
</dbReference>
<dbReference type="HAMAP" id="MF_00472">
    <property type="entry name" value="UbiG"/>
    <property type="match status" value="1"/>
</dbReference>
<dbReference type="InterPro" id="IPR029063">
    <property type="entry name" value="SAM-dependent_MTases_sf"/>
</dbReference>
<dbReference type="InterPro" id="IPR010233">
    <property type="entry name" value="UbiG_MeTrfase"/>
</dbReference>
<dbReference type="NCBIfam" id="TIGR01983">
    <property type="entry name" value="UbiG"/>
    <property type="match status" value="1"/>
</dbReference>
<dbReference type="PANTHER" id="PTHR43464">
    <property type="entry name" value="METHYLTRANSFERASE"/>
    <property type="match status" value="1"/>
</dbReference>
<dbReference type="PANTHER" id="PTHR43464:SF19">
    <property type="entry name" value="UBIQUINONE BIOSYNTHESIS O-METHYLTRANSFERASE, MITOCHONDRIAL"/>
    <property type="match status" value="1"/>
</dbReference>
<dbReference type="Pfam" id="PF13489">
    <property type="entry name" value="Methyltransf_23"/>
    <property type="match status" value="1"/>
</dbReference>
<dbReference type="SUPFAM" id="SSF53335">
    <property type="entry name" value="S-adenosyl-L-methionine-dependent methyltransferases"/>
    <property type="match status" value="1"/>
</dbReference>
<comment type="function">
    <text evidence="1">O-methyltransferase that catalyzes the 2 O-methylation steps in the ubiquinone biosynthetic pathway.</text>
</comment>
<comment type="catalytic activity">
    <reaction evidence="1">
        <text>a 3-demethylubiquinol + S-adenosyl-L-methionine = a ubiquinol + S-adenosyl-L-homocysteine + H(+)</text>
        <dbReference type="Rhea" id="RHEA:44380"/>
        <dbReference type="Rhea" id="RHEA-COMP:9566"/>
        <dbReference type="Rhea" id="RHEA-COMP:10914"/>
        <dbReference type="ChEBI" id="CHEBI:15378"/>
        <dbReference type="ChEBI" id="CHEBI:17976"/>
        <dbReference type="ChEBI" id="CHEBI:57856"/>
        <dbReference type="ChEBI" id="CHEBI:59789"/>
        <dbReference type="ChEBI" id="CHEBI:84422"/>
        <dbReference type="EC" id="2.1.1.64"/>
    </reaction>
</comment>
<comment type="catalytic activity">
    <reaction evidence="1">
        <text>a 3-(all-trans-polyprenyl)benzene-1,2-diol + S-adenosyl-L-methionine = a 2-methoxy-6-(all-trans-polyprenyl)phenol + S-adenosyl-L-homocysteine + H(+)</text>
        <dbReference type="Rhea" id="RHEA:31411"/>
        <dbReference type="Rhea" id="RHEA-COMP:9550"/>
        <dbReference type="Rhea" id="RHEA-COMP:9551"/>
        <dbReference type="ChEBI" id="CHEBI:15378"/>
        <dbReference type="ChEBI" id="CHEBI:57856"/>
        <dbReference type="ChEBI" id="CHEBI:59789"/>
        <dbReference type="ChEBI" id="CHEBI:62729"/>
        <dbReference type="ChEBI" id="CHEBI:62731"/>
        <dbReference type="EC" id="2.1.1.222"/>
    </reaction>
</comment>
<comment type="pathway">
    <text evidence="1">Cofactor biosynthesis; ubiquinone biosynthesis.</text>
</comment>
<comment type="similarity">
    <text evidence="1">Belongs to the methyltransferase superfamily. UbiG/COQ3 family.</text>
</comment>
<comment type="sequence caution" evidence="2">
    <conflict type="erroneous initiation">
        <sequence resource="EMBL-CDS" id="AAZ17995"/>
    </conflict>
</comment>
<evidence type="ECO:0000255" key="1">
    <source>
        <dbReference type="HAMAP-Rule" id="MF_00472"/>
    </source>
</evidence>
<evidence type="ECO:0000305" key="2"/>
<reference key="1">
    <citation type="journal article" date="2010" name="Appl. Environ. Microbiol.">
        <title>The genome sequence of Psychrobacter arcticus 273-4, a psychroactive Siberian permafrost bacterium, reveals mechanisms for adaptation to low-temperature growth.</title>
        <authorList>
            <person name="Ayala-del-Rio H.L."/>
            <person name="Chain P.S."/>
            <person name="Grzymski J.J."/>
            <person name="Ponder M.A."/>
            <person name="Ivanova N."/>
            <person name="Bergholz P.W."/>
            <person name="Di Bartolo G."/>
            <person name="Hauser L."/>
            <person name="Land M."/>
            <person name="Bakermans C."/>
            <person name="Rodrigues D."/>
            <person name="Klappenbach J."/>
            <person name="Zarka D."/>
            <person name="Larimer F."/>
            <person name="Richardson P."/>
            <person name="Murray A."/>
            <person name="Thomashow M."/>
            <person name="Tiedje J.M."/>
        </authorList>
    </citation>
    <scope>NUCLEOTIDE SEQUENCE [LARGE SCALE GENOMIC DNA]</scope>
    <source>
        <strain>DSM 17307 / VKM B-2377 / 273-4</strain>
    </source>
</reference>
<proteinExistence type="inferred from homology"/>
<feature type="chain" id="PRO_0000241722" description="Ubiquinone biosynthesis O-methyltransferase">
    <location>
        <begin position="1"/>
        <end position="257"/>
    </location>
</feature>
<feature type="binding site" evidence="1">
    <location>
        <position position="43"/>
    </location>
    <ligand>
        <name>S-adenosyl-L-methionine</name>
        <dbReference type="ChEBI" id="CHEBI:59789"/>
    </ligand>
</feature>
<feature type="binding site" evidence="1">
    <location>
        <position position="77"/>
    </location>
    <ligand>
        <name>S-adenosyl-L-methionine</name>
        <dbReference type="ChEBI" id="CHEBI:59789"/>
    </ligand>
</feature>
<feature type="binding site" evidence="1">
    <location>
        <position position="98"/>
    </location>
    <ligand>
        <name>S-adenosyl-L-methionine</name>
        <dbReference type="ChEBI" id="CHEBI:59789"/>
    </ligand>
</feature>
<feature type="binding site" evidence="1">
    <location>
        <position position="144"/>
    </location>
    <ligand>
        <name>S-adenosyl-L-methionine</name>
        <dbReference type="ChEBI" id="CHEBI:59789"/>
    </ligand>
</feature>
<organism>
    <name type="scientific">Psychrobacter arcticus (strain DSM 17307 / VKM B-2377 / 273-4)</name>
    <dbReference type="NCBI Taxonomy" id="259536"/>
    <lineage>
        <taxon>Bacteria</taxon>
        <taxon>Pseudomonadati</taxon>
        <taxon>Pseudomonadota</taxon>
        <taxon>Gammaproteobacteria</taxon>
        <taxon>Moraxellales</taxon>
        <taxon>Moraxellaceae</taxon>
        <taxon>Psychrobacter</taxon>
    </lineage>
</organism>
<sequence length="257" mass="28212">MAENTVNAINVDPSEVEKFNKLAGEWWNKTGAFATLHEINPLRLNWIEENVKCGYVSADHQKTAEMGLAGKKVLDVGCGGGILSEAMARRGADVTGIDLGTENLKAASLHAEQSNLQDTLRYQHIPVEALAATHAGQFDVVTCMEMLEHVPDPAAIVDACFKLLAPGGVCVLSTINRNPKSYLFAIVGAEYVLRLLDRGTHDYAKFITPAELDKMAIDAGFTRQDIIGLHYNPLTKRYWLAQNVDVNYMMAVQKPRA</sequence>
<protein>
    <recommendedName>
        <fullName evidence="1">Ubiquinone biosynthesis O-methyltransferase</fullName>
    </recommendedName>
    <alternativeName>
        <fullName evidence="1">2-polyprenyl-6-hydroxyphenol methylase</fullName>
        <ecNumber evidence="1">2.1.1.222</ecNumber>
    </alternativeName>
    <alternativeName>
        <fullName evidence="1">3-demethylubiquinone 3-O-methyltransferase</fullName>
        <ecNumber evidence="1">2.1.1.64</ecNumber>
    </alternativeName>
</protein>